<dbReference type="EMBL" id="X03961">
    <property type="protein sequence ID" value="CAA27591.1"/>
    <property type="molecule type" value="Genomic_DNA"/>
</dbReference>
<dbReference type="PIR" id="S28086">
    <property type="entry name" value="S28086"/>
</dbReference>
<dbReference type="SMR" id="P13783"/>
<dbReference type="GO" id="GO:0003677">
    <property type="term" value="F:DNA binding"/>
    <property type="evidence" value="ECO:0007669"/>
    <property type="project" value="InterPro"/>
</dbReference>
<dbReference type="GO" id="GO:0015074">
    <property type="term" value="P:DNA integration"/>
    <property type="evidence" value="ECO:0007669"/>
    <property type="project" value="UniProtKB-KW"/>
</dbReference>
<dbReference type="GO" id="GO:0006310">
    <property type="term" value="P:DNA recombination"/>
    <property type="evidence" value="ECO:0007669"/>
    <property type="project" value="UniProtKB-KW"/>
</dbReference>
<dbReference type="CDD" id="cd00217">
    <property type="entry name" value="INT_Flp_C"/>
    <property type="match status" value="1"/>
</dbReference>
<dbReference type="Gene3D" id="1.10.443.10">
    <property type="entry name" value="Intergrase catalytic core"/>
    <property type="match status" value="1"/>
</dbReference>
<dbReference type="InterPro" id="IPR011010">
    <property type="entry name" value="DNA_brk_join_enz"/>
</dbReference>
<dbReference type="InterPro" id="IPR013762">
    <property type="entry name" value="Integrase-like_cat_sf"/>
</dbReference>
<dbReference type="InterPro" id="IPR005626">
    <property type="entry name" value="Recombinase_Flp_C"/>
</dbReference>
<dbReference type="InterPro" id="IPR022647">
    <property type="entry name" value="Recombinase_Flp_N"/>
</dbReference>
<dbReference type="Pfam" id="PF05202">
    <property type="entry name" value="Flp_C"/>
    <property type="match status" value="1"/>
</dbReference>
<dbReference type="Pfam" id="PF03930">
    <property type="entry name" value="Flp_N"/>
    <property type="match status" value="1"/>
</dbReference>
<dbReference type="SUPFAM" id="SSF56349">
    <property type="entry name" value="DNA breaking-rejoining enzymes"/>
    <property type="match status" value="1"/>
</dbReference>
<dbReference type="PROSITE" id="PS51899">
    <property type="entry name" value="TYR_RECOMBINASE_FLP"/>
    <property type="match status" value="1"/>
</dbReference>
<name>FLP_KLULC</name>
<comment type="function">
    <text>Catalyzes the recombination between the large inverted repetitions of the plasmid.</text>
</comment>
<comment type="similarity">
    <text evidence="3">Belongs to the 'phage' integrase family.</text>
</comment>
<sequence>MSTFAEAAHLTPHQCANEINEILESDTFNINAKEIRNKLASLFSILTMQSLSIRREMKINTYRSYKSAIGKSLSFDKDDKIIKFTVRLRKTESLQKDIESALPSYKVVVSPFKNQEVSLFDRYEETHKYDASMVGLQFTNILSKEKDIWKIVSRIACFFDQSCVTTTKRAEYRLLLLGAVGNCCRYSDLKNLDPRTFEIYNNSFLGPIVRATVTETKSRTERYVNFYPVNGDCDLLISLYDYLRVCSPIEKTVSSNRPTNQTHQFLPESLARTFSRFLTQHVDEPVFKIWNGPKSHFGRHLMATFLSRSEKGKYVSSLGNWAGDREIQSAVARSHYSHGSVTVDDRVFAFISGFYKEAPLGSEIYVLKDPSNKPLSREELLEEEGNSLGSPPLSPPSSPRLVAQSFSAHPSLQLFEQWHGIISDEVLQFIAEYRRKHELRSQRTVVA</sequence>
<organism>
    <name type="scientific">Kluyveromyces lactis</name>
    <name type="common">Yeast</name>
    <name type="synonym">Candida sphaerica</name>
    <dbReference type="NCBI Taxonomy" id="28985"/>
    <lineage>
        <taxon>Eukaryota</taxon>
        <taxon>Fungi</taxon>
        <taxon>Dikarya</taxon>
        <taxon>Ascomycota</taxon>
        <taxon>Saccharomycotina</taxon>
        <taxon>Saccharomycetes</taxon>
        <taxon>Saccharomycetales</taxon>
        <taxon>Saccharomycetaceae</taxon>
        <taxon>Kluyveromyces</taxon>
    </lineage>
</organism>
<keyword id="KW-0229">DNA integration</keyword>
<keyword id="KW-0233">DNA recombination</keyword>
<keyword id="KW-0614">Plasmid</keyword>
<protein>
    <recommendedName>
        <fullName>Recombinase Flp protein</fullName>
    </recommendedName>
</protein>
<proteinExistence type="inferred from homology"/>
<evidence type="ECO:0000255" key="1">
    <source>
        <dbReference type="PROSITE-ProRule" id="PRU01247"/>
    </source>
</evidence>
<evidence type="ECO:0000256" key="2">
    <source>
        <dbReference type="SAM" id="MobiDB-lite"/>
    </source>
</evidence>
<evidence type="ECO:0000305" key="3"/>
<gene>
    <name type="primary">A</name>
</gene>
<feature type="chain" id="PRO_0000197568" description="Recombinase Flp protein">
    <location>
        <begin position="1"/>
        <end position="447"/>
    </location>
</feature>
<feature type="domain" description="Tyr recombinase Flp-type" evidence="1">
    <location>
        <begin position="130"/>
        <end position="417"/>
    </location>
</feature>
<feature type="region of interest" description="Disordered" evidence="2">
    <location>
        <begin position="376"/>
        <end position="401"/>
    </location>
</feature>
<feature type="active site" description="O-(3'-phospho-DNA)-tyrosine intermediate" evidence="1">
    <location>
        <position position="336"/>
    </location>
</feature>
<geneLocation type="plasmid">
    <name>pKD1</name>
</geneLocation>
<accession>P13783</accession>
<reference key="1">
    <citation type="journal article" date="1986" name="Nucleic Acids Res.">
        <title>Sequence organization of the circular plasmid pKD1 from the yeast Kluyveromyces drosophilarum.</title>
        <authorList>
            <person name="Chen X.J."/>
            <person name="Saliola M."/>
            <person name="Falcone C."/>
            <person name="Bianchi M.M."/>
            <person name="Fukuhara H."/>
        </authorList>
    </citation>
    <scope>NUCLEOTIDE SEQUENCE [GENOMIC DNA]</scope>
    <source>
        <strain>ATCC 56496 / CBS 2105 / CLIB 601 / NRRL Y-8278</strain>
    </source>
</reference>